<protein>
    <recommendedName>
        <fullName evidence="1">tRNA (guanine-N(1)-)-methyltransferase</fullName>
        <ecNumber evidence="1">2.1.1.228</ecNumber>
    </recommendedName>
    <alternativeName>
        <fullName evidence="1">M1G-methyltransferase</fullName>
    </alternativeName>
    <alternativeName>
        <fullName evidence="1">tRNA [GM37] methyltransferase</fullName>
    </alternativeName>
</protein>
<sequence>MKKFTVLTLFPEMFNNFMTTSIIKKALYEKLIAIKIINIRDYSIGKHYQVDDYQYGGGEGMVLMIEPLVAAIKAQQTRDSVTILLTPQGKQYVQEQVQQFAANDNDLILVCGHYEGFDERILYYIDYELSIGDYILTGGELASMVVIDSVTRLCENVINTQSHLNDSFSKNLLDYPVYTKPVEYGGHYVPEVLLSGHHQKIAQWREYEALKKTWLKRPYLLEKKILTTEQQIFLEKIKNEKSFNDRRKEKNSYEDEFNRRNYKRSTS</sequence>
<feature type="chain" id="PRO_0000060455" description="tRNA (guanine-N(1)-)-methyltransferase">
    <location>
        <begin position="1"/>
        <end position="267"/>
    </location>
</feature>
<feature type="region of interest" description="Disordered" evidence="2">
    <location>
        <begin position="245"/>
        <end position="267"/>
    </location>
</feature>
<feature type="compositionally biased region" description="Basic and acidic residues" evidence="2">
    <location>
        <begin position="245"/>
        <end position="259"/>
    </location>
</feature>
<feature type="binding site" evidence="1">
    <location>
        <position position="112"/>
    </location>
    <ligand>
        <name>S-adenosyl-L-methionine</name>
        <dbReference type="ChEBI" id="CHEBI:59789"/>
    </ligand>
</feature>
<feature type="binding site" evidence="1">
    <location>
        <begin position="131"/>
        <end position="136"/>
    </location>
    <ligand>
        <name>S-adenosyl-L-methionine</name>
        <dbReference type="ChEBI" id="CHEBI:59789"/>
    </ligand>
</feature>
<gene>
    <name evidence="1" type="primary">trmD</name>
</gene>
<name>TRMD_SPIKU</name>
<evidence type="ECO:0000255" key="1">
    <source>
        <dbReference type="HAMAP-Rule" id="MF_00605"/>
    </source>
</evidence>
<evidence type="ECO:0000256" key="2">
    <source>
        <dbReference type="SAM" id="MobiDB-lite"/>
    </source>
</evidence>
<organism>
    <name type="scientific">Spiroplasma kunkelii</name>
    <dbReference type="NCBI Taxonomy" id="47834"/>
    <lineage>
        <taxon>Bacteria</taxon>
        <taxon>Bacillati</taxon>
        <taxon>Mycoplasmatota</taxon>
        <taxon>Mollicutes</taxon>
        <taxon>Entomoplasmatales</taxon>
        <taxon>Spiroplasmataceae</taxon>
        <taxon>Spiroplasma</taxon>
    </lineage>
</organism>
<reference key="1">
    <citation type="journal article" date="2003" name="Mol. Genet. Genomics">
        <title>Gene content and organization of an 85-kb DNA segment from the genome of the phytopathogenic mollicute Spiroplasma kunkelii.</title>
        <authorList>
            <person name="Zhao Y."/>
            <person name="Hammond R.W."/>
            <person name="Jomantiene R."/>
            <person name="Dally E.L."/>
            <person name="Lee I.-M."/>
            <person name="Jia H."/>
            <person name="Wu H."/>
            <person name="Lin S."/>
            <person name="Zhang P."/>
            <person name="Kenton S."/>
            <person name="Najar F.Z."/>
            <person name="Hua A."/>
            <person name="Roe B.A."/>
            <person name="Fletcher J."/>
            <person name="Davis R.E."/>
        </authorList>
    </citation>
    <scope>NUCLEOTIDE SEQUENCE [GENOMIC DNA]</scope>
    <source>
        <strain>CR2-3x</strain>
    </source>
</reference>
<accession>Q6XYU1</accession>
<keyword id="KW-0963">Cytoplasm</keyword>
<keyword id="KW-0489">Methyltransferase</keyword>
<keyword id="KW-0949">S-adenosyl-L-methionine</keyword>
<keyword id="KW-0808">Transferase</keyword>
<keyword id="KW-0819">tRNA processing</keyword>
<dbReference type="EC" id="2.1.1.228" evidence="1"/>
<dbReference type="EMBL" id="AY198133">
    <property type="protein sequence ID" value="AAP58938.1"/>
    <property type="molecule type" value="Genomic_DNA"/>
</dbReference>
<dbReference type="SMR" id="Q6XYU1"/>
<dbReference type="GO" id="GO:0005829">
    <property type="term" value="C:cytosol"/>
    <property type="evidence" value="ECO:0007669"/>
    <property type="project" value="TreeGrafter"/>
</dbReference>
<dbReference type="GO" id="GO:0052906">
    <property type="term" value="F:tRNA (guanine(37)-N1)-methyltransferase activity"/>
    <property type="evidence" value="ECO:0007669"/>
    <property type="project" value="UniProtKB-UniRule"/>
</dbReference>
<dbReference type="GO" id="GO:0002939">
    <property type="term" value="P:tRNA N1-guanine methylation"/>
    <property type="evidence" value="ECO:0007669"/>
    <property type="project" value="TreeGrafter"/>
</dbReference>
<dbReference type="CDD" id="cd18080">
    <property type="entry name" value="TrmD-like"/>
    <property type="match status" value="1"/>
</dbReference>
<dbReference type="FunFam" id="1.10.1270.20:FF:000001">
    <property type="entry name" value="tRNA (guanine-N(1)-)-methyltransferase"/>
    <property type="match status" value="1"/>
</dbReference>
<dbReference type="FunFam" id="3.40.1280.10:FF:000001">
    <property type="entry name" value="tRNA (guanine-N(1)-)-methyltransferase"/>
    <property type="match status" value="1"/>
</dbReference>
<dbReference type="Gene3D" id="3.40.1280.10">
    <property type="match status" value="1"/>
</dbReference>
<dbReference type="Gene3D" id="1.10.1270.20">
    <property type="entry name" value="tRNA(m1g37)methyltransferase, domain 2"/>
    <property type="match status" value="1"/>
</dbReference>
<dbReference type="HAMAP" id="MF_00605">
    <property type="entry name" value="TrmD"/>
    <property type="match status" value="1"/>
</dbReference>
<dbReference type="InterPro" id="IPR029028">
    <property type="entry name" value="Alpha/beta_knot_MTases"/>
</dbReference>
<dbReference type="InterPro" id="IPR023148">
    <property type="entry name" value="tRNA_m1G_MeTrfase_C_sf"/>
</dbReference>
<dbReference type="InterPro" id="IPR002649">
    <property type="entry name" value="tRNA_m1G_MeTrfase_TrmD"/>
</dbReference>
<dbReference type="InterPro" id="IPR029026">
    <property type="entry name" value="tRNA_m1G_MTases_N"/>
</dbReference>
<dbReference type="InterPro" id="IPR016009">
    <property type="entry name" value="tRNA_MeTrfase_TRMD/TRM10"/>
</dbReference>
<dbReference type="NCBIfam" id="NF000648">
    <property type="entry name" value="PRK00026.1"/>
    <property type="match status" value="1"/>
</dbReference>
<dbReference type="NCBIfam" id="TIGR00088">
    <property type="entry name" value="trmD"/>
    <property type="match status" value="1"/>
</dbReference>
<dbReference type="PANTHER" id="PTHR46417">
    <property type="entry name" value="TRNA (GUANINE-N(1)-)-METHYLTRANSFERASE"/>
    <property type="match status" value="1"/>
</dbReference>
<dbReference type="PANTHER" id="PTHR46417:SF1">
    <property type="entry name" value="TRNA (GUANINE-N(1)-)-METHYLTRANSFERASE"/>
    <property type="match status" value="1"/>
</dbReference>
<dbReference type="Pfam" id="PF01746">
    <property type="entry name" value="tRNA_m1G_MT"/>
    <property type="match status" value="1"/>
</dbReference>
<dbReference type="PIRSF" id="PIRSF000386">
    <property type="entry name" value="tRNA_mtase"/>
    <property type="match status" value="1"/>
</dbReference>
<dbReference type="SUPFAM" id="SSF75217">
    <property type="entry name" value="alpha/beta knot"/>
    <property type="match status" value="1"/>
</dbReference>
<comment type="function">
    <text evidence="1">Specifically methylates guanosine-37 in various tRNAs.</text>
</comment>
<comment type="catalytic activity">
    <reaction evidence="1">
        <text>guanosine(37) in tRNA + S-adenosyl-L-methionine = N(1)-methylguanosine(37) in tRNA + S-adenosyl-L-homocysteine + H(+)</text>
        <dbReference type="Rhea" id="RHEA:36899"/>
        <dbReference type="Rhea" id="RHEA-COMP:10145"/>
        <dbReference type="Rhea" id="RHEA-COMP:10147"/>
        <dbReference type="ChEBI" id="CHEBI:15378"/>
        <dbReference type="ChEBI" id="CHEBI:57856"/>
        <dbReference type="ChEBI" id="CHEBI:59789"/>
        <dbReference type="ChEBI" id="CHEBI:73542"/>
        <dbReference type="ChEBI" id="CHEBI:74269"/>
        <dbReference type="EC" id="2.1.1.228"/>
    </reaction>
</comment>
<comment type="subunit">
    <text evidence="1">Homodimer.</text>
</comment>
<comment type="subcellular location">
    <subcellularLocation>
        <location evidence="1">Cytoplasm</location>
    </subcellularLocation>
</comment>
<comment type="similarity">
    <text evidence="1">Belongs to the RNA methyltransferase TrmD family.</text>
</comment>
<proteinExistence type="inferred from homology"/>